<protein>
    <recommendedName>
        <fullName evidence="1">ATP-dependent Clp protease proteolytic subunit</fullName>
        <ecNumber evidence="1">3.4.21.92</ecNumber>
    </recommendedName>
    <alternativeName>
        <fullName evidence="1">Endopeptidase Clp</fullName>
    </alternativeName>
</protein>
<sequence>MLVPIVVEQTGRGERSYDIYSRLLKDRIIFLGGGIDDNVANLVIAQLLFLEAEDPDKDIHLYINSPGGVVTAGMAIYDTMRYIKAPVSTICVGQAASMGAFLLSGGEKGKRYSLVNSRIMIHQPLGGFQGQATDIHIHAKEILRMKDQLNALLAEHTGQSVEKVAADTERDYFMSGEEAKNYGIIDAIVTRNVVTGGAN</sequence>
<evidence type="ECO:0000255" key="1">
    <source>
        <dbReference type="HAMAP-Rule" id="MF_00444"/>
    </source>
</evidence>
<reference key="1">
    <citation type="submission" date="2008-07" db="EMBL/GenBank/DDBJ databases">
        <title>Complete sequence of Geobacter bemidjiensis BEM.</title>
        <authorList>
            <consortium name="US DOE Joint Genome Institute"/>
            <person name="Lucas S."/>
            <person name="Copeland A."/>
            <person name="Lapidus A."/>
            <person name="Glavina del Rio T."/>
            <person name="Dalin E."/>
            <person name="Tice H."/>
            <person name="Bruce D."/>
            <person name="Goodwin L."/>
            <person name="Pitluck S."/>
            <person name="Kiss H."/>
            <person name="Brettin T."/>
            <person name="Detter J.C."/>
            <person name="Han C."/>
            <person name="Kuske C.R."/>
            <person name="Schmutz J."/>
            <person name="Larimer F."/>
            <person name="Land M."/>
            <person name="Hauser L."/>
            <person name="Kyrpides N."/>
            <person name="Lykidis A."/>
            <person name="Lovley D."/>
            <person name="Richardson P."/>
        </authorList>
    </citation>
    <scope>NUCLEOTIDE SEQUENCE [LARGE SCALE GENOMIC DNA]</scope>
    <source>
        <strain>ATCC BAA-1014 / DSM 16622 / JCM 12645 / Bem</strain>
    </source>
</reference>
<keyword id="KW-0963">Cytoplasm</keyword>
<keyword id="KW-0378">Hydrolase</keyword>
<keyword id="KW-0645">Protease</keyword>
<keyword id="KW-1185">Reference proteome</keyword>
<keyword id="KW-0720">Serine protease</keyword>
<dbReference type="EC" id="3.4.21.92" evidence="1"/>
<dbReference type="EMBL" id="CP001124">
    <property type="protein sequence ID" value="ACH38291.1"/>
    <property type="molecule type" value="Genomic_DNA"/>
</dbReference>
<dbReference type="RefSeq" id="WP_012529703.1">
    <property type="nucleotide sequence ID" value="NC_011146.1"/>
</dbReference>
<dbReference type="SMR" id="B5EI27"/>
<dbReference type="STRING" id="404380.Gbem_1272"/>
<dbReference type="MEROPS" id="S14.001"/>
<dbReference type="KEGG" id="gbm:Gbem_1272"/>
<dbReference type="eggNOG" id="COG0740">
    <property type="taxonomic scope" value="Bacteria"/>
</dbReference>
<dbReference type="HOGENOM" id="CLU_058707_3_2_7"/>
<dbReference type="OrthoDB" id="9802800at2"/>
<dbReference type="Proteomes" id="UP000008825">
    <property type="component" value="Chromosome"/>
</dbReference>
<dbReference type="GO" id="GO:0005737">
    <property type="term" value="C:cytoplasm"/>
    <property type="evidence" value="ECO:0007669"/>
    <property type="project" value="UniProtKB-SubCell"/>
</dbReference>
<dbReference type="GO" id="GO:0009368">
    <property type="term" value="C:endopeptidase Clp complex"/>
    <property type="evidence" value="ECO:0007669"/>
    <property type="project" value="TreeGrafter"/>
</dbReference>
<dbReference type="GO" id="GO:0004176">
    <property type="term" value="F:ATP-dependent peptidase activity"/>
    <property type="evidence" value="ECO:0007669"/>
    <property type="project" value="InterPro"/>
</dbReference>
<dbReference type="GO" id="GO:0051117">
    <property type="term" value="F:ATPase binding"/>
    <property type="evidence" value="ECO:0007669"/>
    <property type="project" value="TreeGrafter"/>
</dbReference>
<dbReference type="GO" id="GO:0004252">
    <property type="term" value="F:serine-type endopeptidase activity"/>
    <property type="evidence" value="ECO:0007669"/>
    <property type="project" value="UniProtKB-UniRule"/>
</dbReference>
<dbReference type="GO" id="GO:0006515">
    <property type="term" value="P:protein quality control for misfolded or incompletely synthesized proteins"/>
    <property type="evidence" value="ECO:0007669"/>
    <property type="project" value="TreeGrafter"/>
</dbReference>
<dbReference type="CDD" id="cd07017">
    <property type="entry name" value="S14_ClpP_2"/>
    <property type="match status" value="1"/>
</dbReference>
<dbReference type="FunFam" id="3.90.226.10:FF:000001">
    <property type="entry name" value="ATP-dependent Clp protease proteolytic subunit"/>
    <property type="match status" value="1"/>
</dbReference>
<dbReference type="Gene3D" id="3.90.226.10">
    <property type="entry name" value="2-enoyl-CoA Hydratase, Chain A, domain 1"/>
    <property type="match status" value="1"/>
</dbReference>
<dbReference type="HAMAP" id="MF_00444">
    <property type="entry name" value="ClpP"/>
    <property type="match status" value="1"/>
</dbReference>
<dbReference type="InterPro" id="IPR001907">
    <property type="entry name" value="ClpP"/>
</dbReference>
<dbReference type="InterPro" id="IPR029045">
    <property type="entry name" value="ClpP/crotonase-like_dom_sf"/>
</dbReference>
<dbReference type="InterPro" id="IPR023562">
    <property type="entry name" value="ClpP/TepA"/>
</dbReference>
<dbReference type="InterPro" id="IPR018215">
    <property type="entry name" value="ClpP_Ser_AS"/>
</dbReference>
<dbReference type="NCBIfam" id="TIGR00493">
    <property type="entry name" value="clpP"/>
    <property type="match status" value="1"/>
</dbReference>
<dbReference type="NCBIfam" id="NF001368">
    <property type="entry name" value="PRK00277.1"/>
    <property type="match status" value="1"/>
</dbReference>
<dbReference type="NCBIfam" id="NF009205">
    <property type="entry name" value="PRK12553.1"/>
    <property type="match status" value="1"/>
</dbReference>
<dbReference type="PANTHER" id="PTHR10381">
    <property type="entry name" value="ATP-DEPENDENT CLP PROTEASE PROTEOLYTIC SUBUNIT"/>
    <property type="match status" value="1"/>
</dbReference>
<dbReference type="PANTHER" id="PTHR10381:SF70">
    <property type="entry name" value="ATP-DEPENDENT CLP PROTEASE PROTEOLYTIC SUBUNIT"/>
    <property type="match status" value="1"/>
</dbReference>
<dbReference type="Pfam" id="PF00574">
    <property type="entry name" value="CLP_protease"/>
    <property type="match status" value="1"/>
</dbReference>
<dbReference type="PRINTS" id="PR00127">
    <property type="entry name" value="CLPPROTEASEP"/>
</dbReference>
<dbReference type="SUPFAM" id="SSF52096">
    <property type="entry name" value="ClpP/crotonase"/>
    <property type="match status" value="1"/>
</dbReference>
<dbReference type="PROSITE" id="PS00381">
    <property type="entry name" value="CLP_PROTEASE_SER"/>
    <property type="match status" value="1"/>
</dbReference>
<proteinExistence type="inferred from homology"/>
<comment type="function">
    <text evidence="1">Cleaves peptides in various proteins in a process that requires ATP hydrolysis. Has a chymotrypsin-like activity. Plays a major role in the degradation of misfolded proteins.</text>
</comment>
<comment type="catalytic activity">
    <reaction evidence="1">
        <text>Hydrolysis of proteins to small peptides in the presence of ATP and magnesium. alpha-casein is the usual test substrate. In the absence of ATP, only oligopeptides shorter than five residues are hydrolyzed (such as succinyl-Leu-Tyr-|-NHMec, and Leu-Tyr-Leu-|-Tyr-Trp, in which cleavage of the -Tyr-|-Leu- and -Tyr-|-Trp bonds also occurs).</text>
        <dbReference type="EC" id="3.4.21.92"/>
    </reaction>
</comment>
<comment type="subunit">
    <text evidence="1">Fourteen ClpP subunits assemble into 2 heptameric rings which stack back to back to give a disk-like structure with a central cavity, resembling the structure of eukaryotic proteasomes.</text>
</comment>
<comment type="subcellular location">
    <subcellularLocation>
        <location evidence="1">Cytoplasm</location>
    </subcellularLocation>
</comment>
<comment type="similarity">
    <text evidence="1">Belongs to the peptidase S14 family.</text>
</comment>
<organism>
    <name type="scientific">Citrifermentans bemidjiense (strain ATCC BAA-1014 / DSM 16622 / JCM 12645 / Bem)</name>
    <name type="common">Geobacter bemidjiensis</name>
    <dbReference type="NCBI Taxonomy" id="404380"/>
    <lineage>
        <taxon>Bacteria</taxon>
        <taxon>Pseudomonadati</taxon>
        <taxon>Thermodesulfobacteriota</taxon>
        <taxon>Desulfuromonadia</taxon>
        <taxon>Geobacterales</taxon>
        <taxon>Geobacteraceae</taxon>
        <taxon>Citrifermentans</taxon>
    </lineage>
</organism>
<name>CLPP_CITBB</name>
<accession>B5EI27</accession>
<gene>
    <name evidence="1" type="primary">clpP</name>
    <name type="ordered locus">Gbem_1272</name>
</gene>
<feature type="chain" id="PRO_1000189644" description="ATP-dependent Clp protease proteolytic subunit">
    <location>
        <begin position="1"/>
        <end position="199"/>
    </location>
</feature>
<feature type="active site" description="Nucleophile" evidence="1">
    <location>
        <position position="97"/>
    </location>
</feature>
<feature type="active site" evidence="1">
    <location>
        <position position="122"/>
    </location>
</feature>